<reference key="1">
    <citation type="journal article" date="2005" name="J. Bacteriol.">
        <title>Insights on evolution of virulence and resistance from the complete genome analysis of an early methicillin-resistant Staphylococcus aureus strain and a biofilm-producing methicillin-resistant Staphylococcus epidermidis strain.</title>
        <authorList>
            <person name="Gill S.R."/>
            <person name="Fouts D.E."/>
            <person name="Archer G.L."/>
            <person name="Mongodin E.F."/>
            <person name="DeBoy R.T."/>
            <person name="Ravel J."/>
            <person name="Paulsen I.T."/>
            <person name="Kolonay J.F."/>
            <person name="Brinkac L.M."/>
            <person name="Beanan M.J."/>
            <person name="Dodson R.J."/>
            <person name="Daugherty S.C."/>
            <person name="Madupu R."/>
            <person name="Angiuoli S.V."/>
            <person name="Durkin A.S."/>
            <person name="Haft D.H."/>
            <person name="Vamathevan J.J."/>
            <person name="Khouri H."/>
            <person name="Utterback T.R."/>
            <person name="Lee C."/>
            <person name="Dimitrov G."/>
            <person name="Jiang L."/>
            <person name="Qin H."/>
            <person name="Weidman J."/>
            <person name="Tran K."/>
            <person name="Kang K.H."/>
            <person name="Hance I.R."/>
            <person name="Nelson K.E."/>
            <person name="Fraser C.M."/>
        </authorList>
    </citation>
    <scope>NUCLEOTIDE SEQUENCE [LARGE SCALE GENOMIC DNA]</scope>
    <source>
        <strain>ATCC 35984 / DSM 28319 / BCRC 17069 / CCUG 31568 / BM 3577 / RP62A</strain>
    </source>
</reference>
<comment type="similarity">
    <text evidence="1">Belongs to the UPF0223 family.</text>
</comment>
<name>Y684_STAEQ</name>
<sequence length="92" mass="11057">MEYQYPLDLDWTNDEMMKVIHFFNKIENYYEASVKGDEVLNAYKNFKHIVPGKADEKQIFKEFENKSGYNSYKVVQEIKKNPNQTLFSKDFD</sequence>
<organism>
    <name type="scientific">Staphylococcus epidermidis (strain ATCC 35984 / DSM 28319 / BCRC 17069 / CCUG 31568 / BM 3577 / RP62A)</name>
    <dbReference type="NCBI Taxonomy" id="176279"/>
    <lineage>
        <taxon>Bacteria</taxon>
        <taxon>Bacillati</taxon>
        <taxon>Bacillota</taxon>
        <taxon>Bacilli</taxon>
        <taxon>Bacillales</taxon>
        <taxon>Staphylococcaceae</taxon>
        <taxon>Staphylococcus</taxon>
    </lineage>
</organism>
<proteinExistence type="inferred from homology"/>
<dbReference type="EMBL" id="CP000029">
    <property type="protein sequence ID" value="AAW54063.1"/>
    <property type="molecule type" value="Genomic_DNA"/>
</dbReference>
<dbReference type="RefSeq" id="WP_001833064.1">
    <property type="nucleotide sequence ID" value="NC_002976.3"/>
</dbReference>
<dbReference type="SMR" id="Q5HQ72"/>
<dbReference type="STRING" id="176279.SERP0684"/>
<dbReference type="KEGG" id="ser:SERP0684"/>
<dbReference type="eggNOG" id="COG4476">
    <property type="taxonomic scope" value="Bacteria"/>
</dbReference>
<dbReference type="HOGENOM" id="CLU_166693_0_0_9"/>
<dbReference type="Proteomes" id="UP000000531">
    <property type="component" value="Chromosome"/>
</dbReference>
<dbReference type="Gene3D" id="1.10.220.80">
    <property type="entry name" value="BH2638-like"/>
    <property type="match status" value="1"/>
</dbReference>
<dbReference type="HAMAP" id="MF_01041">
    <property type="entry name" value="UPF0223"/>
    <property type="match status" value="1"/>
</dbReference>
<dbReference type="InterPro" id="IPR023324">
    <property type="entry name" value="BH2638-like_sf"/>
</dbReference>
<dbReference type="InterPro" id="IPR007920">
    <property type="entry name" value="UPF0223"/>
</dbReference>
<dbReference type="NCBIfam" id="NF003353">
    <property type="entry name" value="PRK04387.1"/>
    <property type="match status" value="1"/>
</dbReference>
<dbReference type="Pfam" id="PF05256">
    <property type="entry name" value="UPF0223"/>
    <property type="match status" value="1"/>
</dbReference>
<dbReference type="PIRSF" id="PIRSF037260">
    <property type="entry name" value="UPF0223"/>
    <property type="match status" value="1"/>
</dbReference>
<dbReference type="SUPFAM" id="SSF158504">
    <property type="entry name" value="BH2638-like"/>
    <property type="match status" value="1"/>
</dbReference>
<feature type="chain" id="PRO_0000216690" description="UPF0223 protein SERP0684">
    <location>
        <begin position="1"/>
        <end position="92"/>
    </location>
</feature>
<keyword id="KW-1185">Reference proteome</keyword>
<evidence type="ECO:0000255" key="1">
    <source>
        <dbReference type="HAMAP-Rule" id="MF_01041"/>
    </source>
</evidence>
<accession>Q5HQ72</accession>
<gene>
    <name type="ordered locus">SERP0684</name>
</gene>
<protein>
    <recommendedName>
        <fullName evidence="1">UPF0223 protein SERP0684</fullName>
    </recommendedName>
</protein>